<feature type="chain" id="PRO_1000213894" description="Orotidine 5'-phosphate decarboxylase">
    <location>
        <begin position="1"/>
        <end position="278"/>
    </location>
</feature>
<feature type="active site" description="Proton donor" evidence="1">
    <location>
        <position position="95"/>
    </location>
</feature>
<name>PYRF_MYCMM</name>
<comment type="catalytic activity">
    <reaction evidence="1">
        <text>orotidine 5'-phosphate + H(+) = UMP + CO2</text>
        <dbReference type="Rhea" id="RHEA:11596"/>
        <dbReference type="ChEBI" id="CHEBI:15378"/>
        <dbReference type="ChEBI" id="CHEBI:16526"/>
        <dbReference type="ChEBI" id="CHEBI:57538"/>
        <dbReference type="ChEBI" id="CHEBI:57865"/>
        <dbReference type="EC" id="4.1.1.23"/>
    </reaction>
</comment>
<comment type="pathway">
    <text evidence="1">Pyrimidine metabolism; UMP biosynthesis via de novo pathway; UMP from orotate: step 2/2.</text>
</comment>
<comment type="similarity">
    <text evidence="1">Belongs to the OMP decarboxylase family. Type 2 subfamily.</text>
</comment>
<organism>
    <name type="scientific">Mycobacterium marinum (strain ATCC BAA-535 / M)</name>
    <dbReference type="NCBI Taxonomy" id="216594"/>
    <lineage>
        <taxon>Bacteria</taxon>
        <taxon>Bacillati</taxon>
        <taxon>Actinomycetota</taxon>
        <taxon>Actinomycetes</taxon>
        <taxon>Mycobacteriales</taxon>
        <taxon>Mycobacteriaceae</taxon>
        <taxon>Mycobacterium</taxon>
        <taxon>Mycobacterium ulcerans group</taxon>
    </lineage>
</organism>
<reference key="1">
    <citation type="journal article" date="2008" name="Genome Res.">
        <title>Insights from the complete genome sequence of Mycobacterium marinum on the evolution of Mycobacterium tuberculosis.</title>
        <authorList>
            <person name="Stinear T.P."/>
            <person name="Seemann T."/>
            <person name="Harrison P.F."/>
            <person name="Jenkin G.A."/>
            <person name="Davies J.K."/>
            <person name="Johnson P.D."/>
            <person name="Abdellah Z."/>
            <person name="Arrowsmith C."/>
            <person name="Chillingworth T."/>
            <person name="Churcher C."/>
            <person name="Clarke K."/>
            <person name="Cronin A."/>
            <person name="Davis P."/>
            <person name="Goodhead I."/>
            <person name="Holroyd N."/>
            <person name="Jagels K."/>
            <person name="Lord A."/>
            <person name="Moule S."/>
            <person name="Mungall K."/>
            <person name="Norbertczak H."/>
            <person name="Quail M.A."/>
            <person name="Rabbinowitsch E."/>
            <person name="Walker D."/>
            <person name="White B."/>
            <person name="Whitehead S."/>
            <person name="Small P.L."/>
            <person name="Brosch R."/>
            <person name="Ramakrishnan L."/>
            <person name="Fischbach M.A."/>
            <person name="Parkhill J."/>
            <person name="Cole S.T."/>
        </authorList>
    </citation>
    <scope>NUCLEOTIDE SEQUENCE [LARGE SCALE GENOMIC DNA]</scope>
    <source>
        <strain>ATCC BAA-535 / M</strain>
    </source>
</reference>
<dbReference type="EC" id="4.1.1.23" evidence="1"/>
<dbReference type="EMBL" id="CP000854">
    <property type="protein sequence ID" value="ACC40649.1"/>
    <property type="molecule type" value="Genomic_DNA"/>
</dbReference>
<dbReference type="RefSeq" id="WP_012393964.1">
    <property type="nucleotide sequence ID" value="NC_010612.1"/>
</dbReference>
<dbReference type="SMR" id="B2HP45"/>
<dbReference type="STRING" id="216594.MMAR_2200"/>
<dbReference type="GeneID" id="93437576"/>
<dbReference type="KEGG" id="mmi:MMAR_2200"/>
<dbReference type="eggNOG" id="COG0284">
    <property type="taxonomic scope" value="Bacteria"/>
</dbReference>
<dbReference type="HOGENOM" id="CLU_060704_0_0_11"/>
<dbReference type="OrthoDB" id="9808470at2"/>
<dbReference type="UniPathway" id="UPA00070">
    <property type="reaction ID" value="UER00120"/>
</dbReference>
<dbReference type="Proteomes" id="UP000001190">
    <property type="component" value="Chromosome"/>
</dbReference>
<dbReference type="GO" id="GO:0004590">
    <property type="term" value="F:orotidine-5'-phosphate decarboxylase activity"/>
    <property type="evidence" value="ECO:0007669"/>
    <property type="project" value="UniProtKB-UniRule"/>
</dbReference>
<dbReference type="GO" id="GO:0006207">
    <property type="term" value="P:'de novo' pyrimidine nucleobase biosynthetic process"/>
    <property type="evidence" value="ECO:0007669"/>
    <property type="project" value="InterPro"/>
</dbReference>
<dbReference type="GO" id="GO:0044205">
    <property type="term" value="P:'de novo' UMP biosynthetic process"/>
    <property type="evidence" value="ECO:0007669"/>
    <property type="project" value="UniProtKB-UniRule"/>
</dbReference>
<dbReference type="CDD" id="cd04725">
    <property type="entry name" value="OMP_decarboxylase_like"/>
    <property type="match status" value="1"/>
</dbReference>
<dbReference type="Gene3D" id="3.20.20.70">
    <property type="entry name" value="Aldolase class I"/>
    <property type="match status" value="1"/>
</dbReference>
<dbReference type="HAMAP" id="MF_01215">
    <property type="entry name" value="OMPdecase_type2"/>
    <property type="match status" value="1"/>
</dbReference>
<dbReference type="InterPro" id="IPR013785">
    <property type="entry name" value="Aldolase_TIM"/>
</dbReference>
<dbReference type="InterPro" id="IPR018089">
    <property type="entry name" value="OMPdecase_AS"/>
</dbReference>
<dbReference type="InterPro" id="IPR011995">
    <property type="entry name" value="OMPdecase_type-2"/>
</dbReference>
<dbReference type="InterPro" id="IPR001754">
    <property type="entry name" value="OMPdeCOase_dom"/>
</dbReference>
<dbReference type="InterPro" id="IPR011060">
    <property type="entry name" value="RibuloseP-bd_barrel"/>
</dbReference>
<dbReference type="NCBIfam" id="TIGR02127">
    <property type="entry name" value="pyrF_sub2"/>
    <property type="match status" value="1"/>
</dbReference>
<dbReference type="PANTHER" id="PTHR43375">
    <property type="entry name" value="OROTIDINE 5'-PHOSPHATE DECARBOXYLASE"/>
    <property type="match status" value="1"/>
</dbReference>
<dbReference type="PANTHER" id="PTHR43375:SF1">
    <property type="entry name" value="OROTIDINE 5'-PHOSPHATE DECARBOXYLASE"/>
    <property type="match status" value="1"/>
</dbReference>
<dbReference type="Pfam" id="PF00215">
    <property type="entry name" value="OMPdecase"/>
    <property type="match status" value="1"/>
</dbReference>
<dbReference type="SMART" id="SM00934">
    <property type="entry name" value="OMPdecase"/>
    <property type="match status" value="1"/>
</dbReference>
<dbReference type="SUPFAM" id="SSF51366">
    <property type="entry name" value="Ribulose-phoshate binding barrel"/>
    <property type="match status" value="1"/>
</dbReference>
<dbReference type="PROSITE" id="PS00156">
    <property type="entry name" value="OMPDECASE"/>
    <property type="match status" value="1"/>
</dbReference>
<evidence type="ECO:0000255" key="1">
    <source>
        <dbReference type="HAMAP-Rule" id="MF_01215"/>
    </source>
</evidence>
<sequence length="278" mass="27837">MTGFGARLAEAKAHRGPLCLGIDPHPELLRAWDLPATADGLAAFCDICVAAFAGFAVVKPQVAFFEAYGAAGFAVLEGTMAALRANGVLVLADAKRGDIGSTMAAYAAAWAGDSPLAADAVTVSPFLGFGSLRPLLEVATANDRGVFVLAATSNPEGATIQRADADGRTVAQLIVDQVGLFNSEVGEVTGPEPGSVGVVVGATVLNPPDVSGLGGPVLVPGVGVQGGRPEALGGLGGAAPQQLLPAVSREVLRAGPSISEVRAAAERMLDSVAYLSAV</sequence>
<gene>
    <name evidence="1" type="primary">pyrF</name>
    <name type="ordered locus">MMAR_2200</name>
</gene>
<protein>
    <recommendedName>
        <fullName evidence="1">Orotidine 5'-phosphate decarboxylase</fullName>
        <ecNumber evidence="1">4.1.1.23</ecNumber>
    </recommendedName>
    <alternativeName>
        <fullName evidence="1">OMP decarboxylase</fullName>
        <shortName evidence="1">OMPDCase</shortName>
        <shortName evidence="1">OMPdecase</shortName>
    </alternativeName>
</protein>
<accession>B2HP45</accession>
<proteinExistence type="inferred from homology"/>
<keyword id="KW-0210">Decarboxylase</keyword>
<keyword id="KW-0456">Lyase</keyword>
<keyword id="KW-0665">Pyrimidine biosynthesis</keyword>
<keyword id="KW-1185">Reference proteome</keyword>